<protein>
    <recommendedName>
        <fullName>Golgi apparatus membrane protein TVP15</fullName>
    </recommendedName>
</protein>
<feature type="chain" id="PRO_0000240391" description="Golgi apparatus membrane protein TVP15">
    <location>
        <begin position="1"/>
        <end position="143"/>
    </location>
</feature>
<feature type="transmembrane region" description="Helical" evidence="2">
    <location>
        <begin position="14"/>
        <end position="34"/>
    </location>
</feature>
<feature type="transmembrane region" description="Helical" evidence="2">
    <location>
        <begin position="37"/>
        <end position="57"/>
    </location>
</feature>
<feature type="transmembrane region" description="Helical" evidence="2">
    <location>
        <begin position="69"/>
        <end position="88"/>
    </location>
</feature>
<feature type="transmembrane region" description="Helical" evidence="2">
    <location>
        <begin position="94"/>
        <end position="116"/>
    </location>
</feature>
<evidence type="ECO:0000250" key="1"/>
<evidence type="ECO:0000255" key="2"/>
<evidence type="ECO:0000305" key="3"/>
<organism>
    <name type="scientific">Eremothecium gossypii (strain ATCC 10895 / CBS 109.51 / FGSC 9923 / NRRL Y-1056)</name>
    <name type="common">Yeast</name>
    <name type="synonym">Ashbya gossypii</name>
    <dbReference type="NCBI Taxonomy" id="284811"/>
    <lineage>
        <taxon>Eukaryota</taxon>
        <taxon>Fungi</taxon>
        <taxon>Dikarya</taxon>
        <taxon>Ascomycota</taxon>
        <taxon>Saccharomycotina</taxon>
        <taxon>Saccharomycetes</taxon>
        <taxon>Saccharomycetales</taxon>
        <taxon>Saccharomycetaceae</taxon>
        <taxon>Eremothecium</taxon>
    </lineage>
</organism>
<proteinExistence type="inferred from homology"/>
<keyword id="KW-0333">Golgi apparatus</keyword>
<keyword id="KW-0472">Membrane</keyword>
<keyword id="KW-1185">Reference proteome</keyword>
<keyword id="KW-0812">Transmembrane</keyword>
<keyword id="KW-1133">Transmembrane helix</keyword>
<reference key="1">
    <citation type="journal article" date="2004" name="Science">
        <title>The Ashbya gossypii genome as a tool for mapping the ancient Saccharomyces cerevisiae genome.</title>
        <authorList>
            <person name="Dietrich F.S."/>
            <person name="Voegeli S."/>
            <person name="Brachat S."/>
            <person name="Lerch A."/>
            <person name="Gates K."/>
            <person name="Steiner S."/>
            <person name="Mohr C."/>
            <person name="Poehlmann R."/>
            <person name="Luedi P."/>
            <person name="Choi S."/>
            <person name="Wing R.A."/>
            <person name="Flavier A."/>
            <person name="Gaffney T.D."/>
            <person name="Philippsen P."/>
        </authorList>
    </citation>
    <scope>NUCLEOTIDE SEQUENCE [LARGE SCALE GENOMIC DNA]</scope>
    <source>
        <strain>ATCC 10895 / CBS 109.51 / FGSC 9923 / NRRL Y-1056</strain>
    </source>
</reference>
<reference key="2">
    <citation type="journal article" date="2013" name="G3 (Bethesda)">
        <title>Genomes of Ashbya fungi isolated from insects reveal four mating-type loci, numerous translocations, lack of transposons, and distinct gene duplications.</title>
        <authorList>
            <person name="Dietrich F.S."/>
            <person name="Voegeli S."/>
            <person name="Kuo S."/>
            <person name="Philippsen P."/>
        </authorList>
    </citation>
    <scope>GENOME REANNOTATION</scope>
    <source>
        <strain>ATCC 10895 / CBS 109.51 / FGSC 9923 / NRRL Y-1056</strain>
    </source>
</reference>
<gene>
    <name type="primary">TVP15</name>
    <name type="ordered locus">AGR106C</name>
</gene>
<name>TVP15_EREGS</name>
<accession>Q74ZU2</accession>
<dbReference type="EMBL" id="AE016820">
    <property type="protein sequence ID" value="AAS54596.1"/>
    <property type="molecule type" value="Genomic_DNA"/>
</dbReference>
<dbReference type="RefSeq" id="NP_986772.1">
    <property type="nucleotide sequence ID" value="NM_211834.1"/>
</dbReference>
<dbReference type="FunCoup" id="Q74ZU2">
    <property type="interactions" value="76"/>
</dbReference>
<dbReference type="EnsemblFungi" id="AAS54596">
    <property type="protein sequence ID" value="AAS54596"/>
    <property type="gene ID" value="AGOS_AGR106C"/>
</dbReference>
<dbReference type="GeneID" id="4623074"/>
<dbReference type="KEGG" id="ago:AGOS_AGR106C"/>
<dbReference type="eggNOG" id="ENOG502S6ZT">
    <property type="taxonomic scope" value="Eukaryota"/>
</dbReference>
<dbReference type="HOGENOM" id="CLU_120579_0_0_1"/>
<dbReference type="InParanoid" id="Q74ZU2"/>
<dbReference type="OMA" id="MDYSDAF"/>
<dbReference type="OrthoDB" id="423534at2759"/>
<dbReference type="Proteomes" id="UP000000591">
    <property type="component" value="Chromosome VII"/>
</dbReference>
<dbReference type="GO" id="GO:0000139">
    <property type="term" value="C:Golgi membrane"/>
    <property type="evidence" value="ECO:0000318"/>
    <property type="project" value="GO_Central"/>
</dbReference>
<dbReference type="GO" id="GO:0016192">
    <property type="term" value="P:vesicle-mediated transport"/>
    <property type="evidence" value="ECO:0000318"/>
    <property type="project" value="GO_Central"/>
</dbReference>
<dbReference type="InterPro" id="IPR013714">
    <property type="entry name" value="Golgi_TVP15"/>
</dbReference>
<dbReference type="PANTHER" id="PTHR28128">
    <property type="entry name" value="GOLGI APPARATUS MEMBRANE PROTEIN TVP15"/>
    <property type="match status" value="1"/>
</dbReference>
<dbReference type="PANTHER" id="PTHR28128:SF1">
    <property type="entry name" value="GOLGI APPARATUS MEMBRANE PROTEIN TVP15"/>
    <property type="match status" value="1"/>
</dbReference>
<dbReference type="Pfam" id="PF08507">
    <property type="entry name" value="COPI_assoc"/>
    <property type="match status" value="1"/>
</dbReference>
<comment type="function">
    <text evidence="1">Golgi membrane protein involved in vesicular trafficking.</text>
</comment>
<comment type="subcellular location">
    <subcellularLocation>
        <location evidence="1">Golgi apparatus membrane</location>
        <topology evidence="1">Multi-pass membrane protein</topology>
    </subcellularLocation>
</comment>
<comment type="miscellaneous">
    <text>Present with 4540 molecules/cell in log phase SD medium.</text>
</comment>
<comment type="similarity">
    <text evidence="3">Belongs to the TVP15 family.</text>
</comment>
<sequence length="143" mass="15607">MSENDQKGVKFIRALLVTTGAVATLGFLVQLSEVASEFLAAARACFGLPLSVLLVYLEFRPVPLLQQYASFYYSYMGRALLQLLLAVMLLPAGFFQVCAFTMLFMTGFICAALELSSSAPELPSFRNDGRALSIGAEEDDDMI</sequence>